<name>LSRK_YERE8</name>
<comment type="function">
    <text evidence="1">Catalyzes the phosphorylation of autoinducer-2 (AI-2) to phospho-AI-2, which subsequently inactivates the transcriptional regulator LsrR and leads to the transcription of the lsr operon. Phosphorylates the ring-open form of (S)-4,5-dihydroxypentane-2,3-dione (DPD), which is the precursor to all AI-2 signaling molecules, at the C5 position.</text>
</comment>
<comment type="catalytic activity">
    <reaction evidence="1">
        <text>(S)-4,5-dihydroxypentane-2,3-dione + ATP = (2S)-2-hydroxy-3,4-dioxopentyl phosphate + ADP + H(+)</text>
        <dbReference type="Rhea" id="RHEA:15377"/>
        <dbReference type="ChEBI" id="CHEBI:15378"/>
        <dbReference type="ChEBI" id="CHEBI:29484"/>
        <dbReference type="ChEBI" id="CHEBI:30616"/>
        <dbReference type="ChEBI" id="CHEBI:71677"/>
        <dbReference type="ChEBI" id="CHEBI:456216"/>
        <dbReference type="EC" id="2.7.1.189"/>
    </reaction>
</comment>
<comment type="subcellular location">
    <subcellularLocation>
        <location evidence="1">Cytoplasm</location>
    </subcellularLocation>
</comment>
<comment type="similarity">
    <text evidence="1">Belongs to the FGGY kinase family.</text>
</comment>
<comment type="sequence caution" evidence="2">
    <conflict type="erroneous initiation">
        <sequence resource="EMBL-CDS" id="CAL10648"/>
    </conflict>
</comment>
<keyword id="KW-0963">Cytoplasm</keyword>
<keyword id="KW-0418">Kinase</keyword>
<keyword id="KW-0808">Transferase</keyword>
<proteinExistence type="inferred from homology"/>
<sequence length="529" mass="57032">MSQFSTTTSGDYLMALDAGTGSVRAVIFDLNGNQIAAGQAEWLHLPVPDVPGSMEFDLTTNWKLTCQCIRQALHQANLPASAIRAVAACSMREGIVLYDRSGKPIWACANVDARASREVSELKELYNNGFELEVYQCSGQTLALSAMPRLLWLAHYRPDIYRQAGTLTMISDWLANMLSGELAVDPSNAGTTGMLDLVTRNWQPNLLEMAGLRADILSPVKETGTLLGHVTAEAAQECGLLAGTPVVMGGGDVQLGCLGLGVVQPGQTAVLGGTFWQQVVNLPKPITDPNMNTRINPHVIPGMVQAESISFFTGLTMRWFRDAFCAEEKLLAQRLGIDTYSLLEDMAARVPAGAYGVMPIFSDVMRFKSWYHAAPSFINLSLDPEKCNKATLFRALEENAAIVSACNLAQIAEFSGVKASSVVFAGGGAKGKLWSQILADVTGIPVRVPVVKEATALGCAIAAGVGVGLYEALDKTGEQLVRWEREYQPNIEHKALYQAAKTNWQAVYTDQLTLVDSGLTTSLWKAPGL</sequence>
<accession>A1JJ57</accession>
<organism>
    <name type="scientific">Yersinia enterocolitica serotype O:8 / biotype 1B (strain NCTC 13174 / 8081)</name>
    <dbReference type="NCBI Taxonomy" id="393305"/>
    <lineage>
        <taxon>Bacteria</taxon>
        <taxon>Pseudomonadati</taxon>
        <taxon>Pseudomonadota</taxon>
        <taxon>Gammaproteobacteria</taxon>
        <taxon>Enterobacterales</taxon>
        <taxon>Yersiniaceae</taxon>
        <taxon>Yersinia</taxon>
    </lineage>
</organism>
<dbReference type="EC" id="2.7.1.189" evidence="1"/>
<dbReference type="EMBL" id="AM286415">
    <property type="protein sequence ID" value="CAL10648.1"/>
    <property type="status" value="ALT_INIT"/>
    <property type="molecule type" value="Genomic_DNA"/>
</dbReference>
<dbReference type="RefSeq" id="WP_042661593.1">
    <property type="nucleotide sequence ID" value="NC_008800.1"/>
</dbReference>
<dbReference type="RefSeq" id="YP_001004890.1">
    <property type="nucleotide sequence ID" value="NC_008800.1"/>
</dbReference>
<dbReference type="SMR" id="A1JJ57"/>
<dbReference type="KEGG" id="yen:YE0530"/>
<dbReference type="PATRIC" id="fig|393305.7.peg.621"/>
<dbReference type="eggNOG" id="COG1070">
    <property type="taxonomic scope" value="Bacteria"/>
</dbReference>
<dbReference type="HOGENOM" id="CLU_009281_3_4_6"/>
<dbReference type="OrthoDB" id="9805576at2"/>
<dbReference type="Proteomes" id="UP000000642">
    <property type="component" value="Chromosome"/>
</dbReference>
<dbReference type="GO" id="GO:0005737">
    <property type="term" value="C:cytoplasm"/>
    <property type="evidence" value="ECO:0007669"/>
    <property type="project" value="UniProtKB-SubCell"/>
</dbReference>
<dbReference type="GO" id="GO:0071518">
    <property type="term" value="F:autoinducer-2 kinase activity"/>
    <property type="evidence" value="ECO:0007669"/>
    <property type="project" value="UniProtKB-UniRule"/>
</dbReference>
<dbReference type="GO" id="GO:0005975">
    <property type="term" value="P:carbohydrate metabolic process"/>
    <property type="evidence" value="ECO:0007669"/>
    <property type="project" value="InterPro"/>
</dbReference>
<dbReference type="GO" id="GO:0009372">
    <property type="term" value="P:quorum sensing"/>
    <property type="evidence" value="ECO:0007669"/>
    <property type="project" value="InterPro"/>
</dbReference>
<dbReference type="CDD" id="cd07775">
    <property type="entry name" value="ASKHA_NBD_FGGY_AI-2K"/>
    <property type="match status" value="1"/>
</dbReference>
<dbReference type="Gene3D" id="3.30.420.40">
    <property type="match status" value="2"/>
</dbReference>
<dbReference type="HAMAP" id="MF_02053">
    <property type="entry name" value="LsrK"/>
    <property type="match status" value="1"/>
</dbReference>
<dbReference type="InterPro" id="IPR033676">
    <property type="entry name" value="AI-2_kinase"/>
</dbReference>
<dbReference type="InterPro" id="IPR043129">
    <property type="entry name" value="ATPase_NBD"/>
</dbReference>
<dbReference type="InterPro" id="IPR000577">
    <property type="entry name" value="Carb_kinase_FGGY"/>
</dbReference>
<dbReference type="InterPro" id="IPR018485">
    <property type="entry name" value="FGGY_C"/>
</dbReference>
<dbReference type="InterPro" id="IPR050406">
    <property type="entry name" value="FGGY_Carb_Kinase"/>
</dbReference>
<dbReference type="InterPro" id="IPR018484">
    <property type="entry name" value="FGGY_N"/>
</dbReference>
<dbReference type="NCBIfam" id="NF008187">
    <property type="entry name" value="PRK10939.1"/>
    <property type="match status" value="1"/>
</dbReference>
<dbReference type="PANTHER" id="PTHR43095:SF1">
    <property type="entry name" value="AUTOINDUCER-2 KINASE"/>
    <property type="match status" value="1"/>
</dbReference>
<dbReference type="PANTHER" id="PTHR43095">
    <property type="entry name" value="SUGAR KINASE"/>
    <property type="match status" value="1"/>
</dbReference>
<dbReference type="Pfam" id="PF02782">
    <property type="entry name" value="FGGY_C"/>
    <property type="match status" value="1"/>
</dbReference>
<dbReference type="Pfam" id="PF00370">
    <property type="entry name" value="FGGY_N"/>
    <property type="match status" value="1"/>
</dbReference>
<dbReference type="PIRSF" id="PIRSF000538">
    <property type="entry name" value="GlpK"/>
    <property type="match status" value="1"/>
</dbReference>
<dbReference type="SUPFAM" id="SSF53067">
    <property type="entry name" value="Actin-like ATPase domain"/>
    <property type="match status" value="2"/>
</dbReference>
<reference key="1">
    <citation type="journal article" date="2006" name="PLoS Genet.">
        <title>The complete genome sequence and comparative genome analysis of the high pathogenicity Yersinia enterocolitica strain 8081.</title>
        <authorList>
            <person name="Thomson N.R."/>
            <person name="Howard S."/>
            <person name="Wren B.W."/>
            <person name="Holden M.T.G."/>
            <person name="Crossman L."/>
            <person name="Challis G.L."/>
            <person name="Churcher C."/>
            <person name="Mungall K."/>
            <person name="Brooks K."/>
            <person name="Chillingworth T."/>
            <person name="Feltwell T."/>
            <person name="Abdellah Z."/>
            <person name="Hauser H."/>
            <person name="Jagels K."/>
            <person name="Maddison M."/>
            <person name="Moule S."/>
            <person name="Sanders M."/>
            <person name="Whitehead S."/>
            <person name="Quail M.A."/>
            <person name="Dougan G."/>
            <person name="Parkhill J."/>
            <person name="Prentice M.B."/>
        </authorList>
    </citation>
    <scope>NUCLEOTIDE SEQUENCE [LARGE SCALE GENOMIC DNA]</scope>
    <source>
        <strain>NCTC 13174 / 8081</strain>
    </source>
</reference>
<feature type="chain" id="PRO_0000351600" description="Autoinducer-2 kinase">
    <location>
        <begin position="1"/>
        <end position="529"/>
    </location>
</feature>
<gene>
    <name evidence="1" type="primary">lsrK</name>
    <name type="ordered locus">YE0530</name>
</gene>
<protein>
    <recommendedName>
        <fullName evidence="1">Autoinducer-2 kinase</fullName>
        <shortName evidence="1">AI-2 kinase</shortName>
        <ecNumber evidence="1">2.7.1.189</ecNumber>
    </recommendedName>
</protein>
<evidence type="ECO:0000255" key="1">
    <source>
        <dbReference type="HAMAP-Rule" id="MF_02053"/>
    </source>
</evidence>
<evidence type="ECO:0000305" key="2"/>